<keyword id="KW-0413">Isomerase</keyword>
<keyword id="KW-1185">Reference proteome</keyword>
<gene>
    <name evidence="1" type="primary">rpiA</name>
    <name type="ordered locus">BPSL1871</name>
</gene>
<organism>
    <name type="scientific">Burkholderia pseudomallei (strain K96243)</name>
    <dbReference type="NCBI Taxonomy" id="272560"/>
    <lineage>
        <taxon>Bacteria</taxon>
        <taxon>Pseudomonadati</taxon>
        <taxon>Pseudomonadota</taxon>
        <taxon>Betaproteobacteria</taxon>
        <taxon>Burkholderiales</taxon>
        <taxon>Burkholderiaceae</taxon>
        <taxon>Burkholderia</taxon>
        <taxon>pseudomallei group</taxon>
    </lineage>
</organism>
<feature type="chain" id="PRO_0000158402" description="Ribose-5-phosphate isomerase A">
    <location>
        <begin position="1"/>
        <end position="231"/>
    </location>
</feature>
<feature type="active site" description="Proton acceptor" evidence="1">
    <location>
        <position position="107"/>
    </location>
</feature>
<feature type="binding site" evidence="1">
    <location>
        <begin position="32"/>
        <end position="35"/>
    </location>
    <ligand>
        <name>substrate</name>
    </ligand>
</feature>
<feature type="binding site" evidence="1">
    <location>
        <begin position="85"/>
        <end position="88"/>
    </location>
    <ligand>
        <name>substrate</name>
    </ligand>
</feature>
<feature type="binding site" evidence="1">
    <location>
        <begin position="98"/>
        <end position="101"/>
    </location>
    <ligand>
        <name>substrate</name>
    </ligand>
</feature>
<feature type="binding site" evidence="1">
    <location>
        <position position="125"/>
    </location>
    <ligand>
        <name>substrate</name>
    </ligand>
</feature>
<reference key="1">
    <citation type="journal article" date="2004" name="Proc. Natl. Acad. Sci. U.S.A.">
        <title>Genomic plasticity of the causative agent of melioidosis, Burkholderia pseudomallei.</title>
        <authorList>
            <person name="Holden M.T.G."/>
            <person name="Titball R.W."/>
            <person name="Peacock S.J."/>
            <person name="Cerdeno-Tarraga A.-M."/>
            <person name="Atkins T."/>
            <person name="Crossman L.C."/>
            <person name="Pitt T."/>
            <person name="Churcher C."/>
            <person name="Mungall K.L."/>
            <person name="Bentley S.D."/>
            <person name="Sebaihia M."/>
            <person name="Thomson N.R."/>
            <person name="Bason N."/>
            <person name="Beacham I.R."/>
            <person name="Brooks K."/>
            <person name="Brown K.A."/>
            <person name="Brown N.F."/>
            <person name="Challis G.L."/>
            <person name="Cherevach I."/>
            <person name="Chillingworth T."/>
            <person name="Cronin A."/>
            <person name="Crossett B."/>
            <person name="Davis P."/>
            <person name="DeShazer D."/>
            <person name="Feltwell T."/>
            <person name="Fraser A."/>
            <person name="Hance Z."/>
            <person name="Hauser H."/>
            <person name="Holroyd S."/>
            <person name="Jagels K."/>
            <person name="Keith K.E."/>
            <person name="Maddison M."/>
            <person name="Moule S."/>
            <person name="Price C."/>
            <person name="Quail M.A."/>
            <person name="Rabbinowitsch E."/>
            <person name="Rutherford K."/>
            <person name="Sanders M."/>
            <person name="Simmonds M."/>
            <person name="Songsivilai S."/>
            <person name="Stevens K."/>
            <person name="Tumapa S."/>
            <person name="Vesaratchavest M."/>
            <person name="Whitehead S."/>
            <person name="Yeats C."/>
            <person name="Barrell B.G."/>
            <person name="Oyston P.C.F."/>
            <person name="Parkhill J."/>
        </authorList>
    </citation>
    <scope>NUCLEOTIDE SEQUENCE [LARGE SCALE GENOMIC DNA]</scope>
    <source>
        <strain>K96243</strain>
    </source>
</reference>
<name>RPIA_BURPS</name>
<comment type="function">
    <text evidence="1">Catalyzes the reversible conversion of ribose-5-phosphate to ribulose 5-phosphate.</text>
</comment>
<comment type="catalytic activity">
    <reaction evidence="1">
        <text>aldehydo-D-ribose 5-phosphate = D-ribulose 5-phosphate</text>
        <dbReference type="Rhea" id="RHEA:14657"/>
        <dbReference type="ChEBI" id="CHEBI:58121"/>
        <dbReference type="ChEBI" id="CHEBI:58273"/>
        <dbReference type="EC" id="5.3.1.6"/>
    </reaction>
</comment>
<comment type="pathway">
    <text evidence="1">Carbohydrate degradation; pentose phosphate pathway; D-ribose 5-phosphate from D-ribulose 5-phosphate (non-oxidative stage): step 1/1.</text>
</comment>
<comment type="subunit">
    <text evidence="1">Homodimer.</text>
</comment>
<comment type="similarity">
    <text evidence="1">Belongs to the ribose 5-phosphate isomerase family.</text>
</comment>
<protein>
    <recommendedName>
        <fullName evidence="1">Ribose-5-phosphate isomerase A</fullName>
        <ecNumber evidence="1">5.3.1.6</ecNumber>
    </recommendedName>
    <alternativeName>
        <fullName evidence="1">Phosphoriboisomerase A</fullName>
        <shortName evidence="1">PRI</shortName>
    </alternativeName>
</protein>
<proteinExistence type="inferred from homology"/>
<dbReference type="EC" id="5.3.1.6" evidence="1"/>
<dbReference type="EMBL" id="BX571965">
    <property type="protein sequence ID" value="CAH35870.1"/>
    <property type="molecule type" value="Genomic_DNA"/>
</dbReference>
<dbReference type="RefSeq" id="WP_004192848.1">
    <property type="nucleotide sequence ID" value="NZ_CP009538.1"/>
</dbReference>
<dbReference type="RefSeq" id="YP_108470.1">
    <property type="nucleotide sequence ID" value="NC_006350.1"/>
</dbReference>
<dbReference type="SMR" id="Q63TU6"/>
<dbReference type="STRING" id="272560.BPSL1871"/>
<dbReference type="GeneID" id="93060124"/>
<dbReference type="KEGG" id="bps:BPSL1871"/>
<dbReference type="PATRIC" id="fig|272560.51.peg.4006"/>
<dbReference type="eggNOG" id="COG0120">
    <property type="taxonomic scope" value="Bacteria"/>
</dbReference>
<dbReference type="UniPathway" id="UPA00115">
    <property type="reaction ID" value="UER00412"/>
</dbReference>
<dbReference type="Proteomes" id="UP000000605">
    <property type="component" value="Chromosome 1"/>
</dbReference>
<dbReference type="GO" id="GO:0005829">
    <property type="term" value="C:cytosol"/>
    <property type="evidence" value="ECO:0007669"/>
    <property type="project" value="TreeGrafter"/>
</dbReference>
<dbReference type="GO" id="GO:0004751">
    <property type="term" value="F:ribose-5-phosphate isomerase activity"/>
    <property type="evidence" value="ECO:0007669"/>
    <property type="project" value="UniProtKB-UniRule"/>
</dbReference>
<dbReference type="GO" id="GO:0006014">
    <property type="term" value="P:D-ribose metabolic process"/>
    <property type="evidence" value="ECO:0007669"/>
    <property type="project" value="TreeGrafter"/>
</dbReference>
<dbReference type="GO" id="GO:0009052">
    <property type="term" value="P:pentose-phosphate shunt, non-oxidative branch"/>
    <property type="evidence" value="ECO:0007669"/>
    <property type="project" value="UniProtKB-UniRule"/>
</dbReference>
<dbReference type="CDD" id="cd01398">
    <property type="entry name" value="RPI_A"/>
    <property type="match status" value="1"/>
</dbReference>
<dbReference type="FunFam" id="3.40.50.1360:FF:000001">
    <property type="entry name" value="Ribose-5-phosphate isomerase A"/>
    <property type="match status" value="1"/>
</dbReference>
<dbReference type="Gene3D" id="3.30.70.260">
    <property type="match status" value="1"/>
</dbReference>
<dbReference type="Gene3D" id="3.40.50.1360">
    <property type="match status" value="1"/>
</dbReference>
<dbReference type="HAMAP" id="MF_00170">
    <property type="entry name" value="Rib_5P_isom_A"/>
    <property type="match status" value="1"/>
</dbReference>
<dbReference type="InterPro" id="IPR037171">
    <property type="entry name" value="NagB/RpiA_transferase-like"/>
</dbReference>
<dbReference type="InterPro" id="IPR020672">
    <property type="entry name" value="Ribose5P_isomerase_typA_subgr"/>
</dbReference>
<dbReference type="InterPro" id="IPR004788">
    <property type="entry name" value="Ribose5P_isomerase_type_A"/>
</dbReference>
<dbReference type="NCBIfam" id="NF001924">
    <property type="entry name" value="PRK00702.1"/>
    <property type="match status" value="1"/>
</dbReference>
<dbReference type="NCBIfam" id="TIGR00021">
    <property type="entry name" value="rpiA"/>
    <property type="match status" value="1"/>
</dbReference>
<dbReference type="PANTHER" id="PTHR11934">
    <property type="entry name" value="RIBOSE-5-PHOSPHATE ISOMERASE"/>
    <property type="match status" value="1"/>
</dbReference>
<dbReference type="PANTHER" id="PTHR11934:SF0">
    <property type="entry name" value="RIBOSE-5-PHOSPHATE ISOMERASE"/>
    <property type="match status" value="1"/>
</dbReference>
<dbReference type="Pfam" id="PF06026">
    <property type="entry name" value="Rib_5-P_isom_A"/>
    <property type="match status" value="1"/>
</dbReference>
<dbReference type="SUPFAM" id="SSF75445">
    <property type="entry name" value="D-ribose-5-phosphate isomerase (RpiA), lid domain"/>
    <property type="match status" value="1"/>
</dbReference>
<dbReference type="SUPFAM" id="SSF100950">
    <property type="entry name" value="NagB/RpiA/CoA transferase-like"/>
    <property type="match status" value="1"/>
</dbReference>
<sequence length="231" mass="24203">MTQDELKRLVGEAAARYVTENVPQGAVIGVGTGSTANCFIDALAAVKDRYRGAVSSSVATTERLKSHGIKVFDLNEIESLQVYVDGADEIDGSGAMIKGGGGALTREKIVASVAETFVCIADASKRVAVLGQFPLPVEVVPMARTAIGRRLAALGGVPVLRVKQDGAPYVTDNGNEILDVKGLRIDDPRALEAAINGWPGVVTVGLFAQRGADLCLLGTERGVETLRYAAH</sequence>
<evidence type="ECO:0000255" key="1">
    <source>
        <dbReference type="HAMAP-Rule" id="MF_00170"/>
    </source>
</evidence>
<accession>Q63TU6</accession>